<keyword id="KW-0066">ATP synthesis</keyword>
<keyword id="KW-0997">Cell inner membrane</keyword>
<keyword id="KW-1003">Cell membrane</keyword>
<keyword id="KW-0138">CF(0)</keyword>
<keyword id="KW-0375">Hydrogen ion transport</keyword>
<keyword id="KW-0406">Ion transport</keyword>
<keyword id="KW-0472">Membrane</keyword>
<keyword id="KW-1185">Reference proteome</keyword>
<keyword id="KW-0812">Transmembrane</keyword>
<keyword id="KW-1133">Transmembrane helix</keyword>
<keyword id="KW-0813">Transport</keyword>
<dbReference type="EMBL" id="CP000449">
    <property type="protein sequence ID" value="ABI66493.1"/>
    <property type="molecule type" value="Genomic_DNA"/>
</dbReference>
<dbReference type="RefSeq" id="WP_011644138.1">
    <property type="nucleotide sequence ID" value="NC_008347.1"/>
</dbReference>
<dbReference type="SMR" id="Q0AMJ4"/>
<dbReference type="STRING" id="394221.Mmar10_2201"/>
<dbReference type="KEGG" id="mmr:Mmar10_2201"/>
<dbReference type="eggNOG" id="COG0356">
    <property type="taxonomic scope" value="Bacteria"/>
</dbReference>
<dbReference type="HOGENOM" id="CLU_041018_0_2_5"/>
<dbReference type="OrthoDB" id="9809130at2"/>
<dbReference type="Proteomes" id="UP000001964">
    <property type="component" value="Chromosome"/>
</dbReference>
<dbReference type="GO" id="GO:0005886">
    <property type="term" value="C:plasma membrane"/>
    <property type="evidence" value="ECO:0007669"/>
    <property type="project" value="UniProtKB-SubCell"/>
</dbReference>
<dbReference type="GO" id="GO:0045259">
    <property type="term" value="C:proton-transporting ATP synthase complex"/>
    <property type="evidence" value="ECO:0007669"/>
    <property type="project" value="UniProtKB-KW"/>
</dbReference>
<dbReference type="GO" id="GO:0046933">
    <property type="term" value="F:proton-transporting ATP synthase activity, rotational mechanism"/>
    <property type="evidence" value="ECO:0007669"/>
    <property type="project" value="UniProtKB-UniRule"/>
</dbReference>
<dbReference type="CDD" id="cd00310">
    <property type="entry name" value="ATP-synt_Fo_a_6"/>
    <property type="match status" value="1"/>
</dbReference>
<dbReference type="FunFam" id="1.20.120.220:FF:000003">
    <property type="entry name" value="ATP synthase subunit a"/>
    <property type="match status" value="1"/>
</dbReference>
<dbReference type="Gene3D" id="1.20.120.220">
    <property type="entry name" value="ATP synthase, F0 complex, subunit A"/>
    <property type="match status" value="1"/>
</dbReference>
<dbReference type="HAMAP" id="MF_01393">
    <property type="entry name" value="ATP_synth_a_bact"/>
    <property type="match status" value="1"/>
</dbReference>
<dbReference type="InterPro" id="IPR000568">
    <property type="entry name" value="ATP_synth_F0_asu"/>
</dbReference>
<dbReference type="InterPro" id="IPR023011">
    <property type="entry name" value="ATP_synth_F0_asu_AS"/>
</dbReference>
<dbReference type="InterPro" id="IPR045083">
    <property type="entry name" value="ATP_synth_F0_asu_bact/mt"/>
</dbReference>
<dbReference type="InterPro" id="IPR035908">
    <property type="entry name" value="F0_ATP_A_sf"/>
</dbReference>
<dbReference type="NCBIfam" id="TIGR01131">
    <property type="entry name" value="ATP_synt_6_or_A"/>
    <property type="match status" value="1"/>
</dbReference>
<dbReference type="NCBIfam" id="NF004482">
    <property type="entry name" value="PRK05815.2-4"/>
    <property type="match status" value="1"/>
</dbReference>
<dbReference type="PANTHER" id="PTHR11410">
    <property type="entry name" value="ATP SYNTHASE SUBUNIT A"/>
    <property type="match status" value="1"/>
</dbReference>
<dbReference type="PANTHER" id="PTHR11410:SF0">
    <property type="entry name" value="ATP SYNTHASE SUBUNIT A"/>
    <property type="match status" value="1"/>
</dbReference>
<dbReference type="Pfam" id="PF00119">
    <property type="entry name" value="ATP-synt_A"/>
    <property type="match status" value="1"/>
</dbReference>
<dbReference type="PRINTS" id="PR00123">
    <property type="entry name" value="ATPASEA"/>
</dbReference>
<dbReference type="SUPFAM" id="SSF81336">
    <property type="entry name" value="F1F0 ATP synthase subunit A"/>
    <property type="match status" value="1"/>
</dbReference>
<dbReference type="PROSITE" id="PS00449">
    <property type="entry name" value="ATPASE_A"/>
    <property type="match status" value="1"/>
</dbReference>
<accession>Q0AMJ4</accession>
<protein>
    <recommendedName>
        <fullName evidence="1">ATP synthase subunit a</fullName>
    </recommendedName>
    <alternativeName>
        <fullName evidence="1">ATP synthase F0 sector subunit a</fullName>
    </alternativeName>
    <alternativeName>
        <fullName evidence="1">F-ATPase subunit 6</fullName>
    </alternativeName>
</protein>
<reference key="1">
    <citation type="submission" date="2006-08" db="EMBL/GenBank/DDBJ databases">
        <title>Complete sequence of Maricaulis maris MCS10.</title>
        <authorList>
            <consortium name="US DOE Joint Genome Institute"/>
            <person name="Copeland A."/>
            <person name="Lucas S."/>
            <person name="Lapidus A."/>
            <person name="Barry K."/>
            <person name="Detter J.C."/>
            <person name="Glavina del Rio T."/>
            <person name="Hammon N."/>
            <person name="Israni S."/>
            <person name="Dalin E."/>
            <person name="Tice H."/>
            <person name="Pitluck S."/>
            <person name="Saunders E."/>
            <person name="Brettin T."/>
            <person name="Bruce D."/>
            <person name="Han C."/>
            <person name="Tapia R."/>
            <person name="Gilna P."/>
            <person name="Schmutz J."/>
            <person name="Larimer F."/>
            <person name="Land M."/>
            <person name="Hauser L."/>
            <person name="Kyrpides N."/>
            <person name="Mikhailova N."/>
            <person name="Viollier P."/>
            <person name="Stephens C."/>
            <person name="Richardson P."/>
        </authorList>
    </citation>
    <scope>NUCLEOTIDE SEQUENCE [LARGE SCALE GENOMIC DNA]</scope>
    <source>
        <strain>MCS10</strain>
    </source>
</reference>
<comment type="function">
    <text evidence="1">Key component of the proton channel; it plays a direct role in the translocation of protons across the membrane.</text>
</comment>
<comment type="subunit">
    <text evidence="1">F-type ATPases have 2 components, CF(1) - the catalytic core - and CF(0) - the membrane proton channel. CF(1) has five subunits: alpha(3), beta(3), gamma(1), delta(1), epsilon(1). CF(0) has three main subunits: a(1), b(2) and c(9-12). The alpha and beta chains form an alternating ring which encloses part of the gamma chain. CF(1) is attached to CF(0) by a central stalk formed by the gamma and epsilon chains, while a peripheral stalk is formed by the delta and b chains.</text>
</comment>
<comment type="subcellular location">
    <subcellularLocation>
        <location evidence="1">Cell inner membrane</location>
        <topology evidence="1">Multi-pass membrane protein</topology>
    </subcellularLocation>
</comment>
<comment type="similarity">
    <text evidence="1">Belongs to the ATPase A chain family.</text>
</comment>
<sequence>MADTNPIKQFEVHEVFPFEAFGLNLAFTNSSYFMVLTTVLTIVLFMVAMSSRALVPNRAQSVAEIIYGFVADMVRSTAGQEGLRFFPFVFTLFIFILVANMLGMFPYFPAPGAHSFTITSHLIVTVALAMLVWLTVIIYGVFKNGFGFLKLFVPSGVPIFVLPLVVVIEIISFVSRPLSHSVRLFANMLAGHILLKVFAGFVVTLAAAWGGFGYLAGIAPLAMAVSLTALEFLVAFLQAYVFAMLTCIYLNDALHPGH</sequence>
<feature type="chain" id="PRO_0000362342" description="ATP synthase subunit a">
    <location>
        <begin position="1"/>
        <end position="258"/>
    </location>
</feature>
<feature type="transmembrane region" description="Helical" evidence="1">
    <location>
        <begin position="30"/>
        <end position="50"/>
    </location>
</feature>
<feature type="transmembrane region" description="Helical" evidence="1">
    <location>
        <begin position="85"/>
        <end position="105"/>
    </location>
</feature>
<feature type="transmembrane region" description="Helical" evidence="1">
    <location>
        <begin position="122"/>
        <end position="142"/>
    </location>
</feature>
<feature type="transmembrane region" description="Helical" evidence="1">
    <location>
        <begin position="151"/>
        <end position="171"/>
    </location>
</feature>
<feature type="transmembrane region" description="Helical" evidence="1">
    <location>
        <begin position="198"/>
        <end position="218"/>
    </location>
</feature>
<feature type="transmembrane region" description="Helical" evidence="1">
    <location>
        <begin position="230"/>
        <end position="250"/>
    </location>
</feature>
<gene>
    <name evidence="1" type="primary">atpB</name>
    <name type="ordered locus">Mmar10_2201</name>
</gene>
<organism>
    <name type="scientific">Maricaulis maris (strain MCS10)</name>
    <name type="common">Caulobacter maris</name>
    <dbReference type="NCBI Taxonomy" id="394221"/>
    <lineage>
        <taxon>Bacteria</taxon>
        <taxon>Pseudomonadati</taxon>
        <taxon>Pseudomonadota</taxon>
        <taxon>Alphaproteobacteria</taxon>
        <taxon>Maricaulales</taxon>
        <taxon>Maricaulaceae</taxon>
        <taxon>Maricaulis</taxon>
    </lineage>
</organism>
<proteinExistence type="inferred from homology"/>
<evidence type="ECO:0000255" key="1">
    <source>
        <dbReference type="HAMAP-Rule" id="MF_01393"/>
    </source>
</evidence>
<name>ATP6_MARMM</name>